<reference key="1">
    <citation type="journal article" date="2009" name="PLoS Genet.">
        <title>Organised genome dynamics in the Escherichia coli species results in highly diverse adaptive paths.</title>
        <authorList>
            <person name="Touchon M."/>
            <person name="Hoede C."/>
            <person name="Tenaillon O."/>
            <person name="Barbe V."/>
            <person name="Baeriswyl S."/>
            <person name="Bidet P."/>
            <person name="Bingen E."/>
            <person name="Bonacorsi S."/>
            <person name="Bouchier C."/>
            <person name="Bouvet O."/>
            <person name="Calteau A."/>
            <person name="Chiapello H."/>
            <person name="Clermont O."/>
            <person name="Cruveiller S."/>
            <person name="Danchin A."/>
            <person name="Diard M."/>
            <person name="Dossat C."/>
            <person name="Karoui M.E."/>
            <person name="Frapy E."/>
            <person name="Garry L."/>
            <person name="Ghigo J.M."/>
            <person name="Gilles A.M."/>
            <person name="Johnson J."/>
            <person name="Le Bouguenec C."/>
            <person name="Lescat M."/>
            <person name="Mangenot S."/>
            <person name="Martinez-Jehanne V."/>
            <person name="Matic I."/>
            <person name="Nassif X."/>
            <person name="Oztas S."/>
            <person name="Petit M.A."/>
            <person name="Pichon C."/>
            <person name="Rouy Z."/>
            <person name="Ruf C.S."/>
            <person name="Schneider D."/>
            <person name="Tourret J."/>
            <person name="Vacherie B."/>
            <person name="Vallenet D."/>
            <person name="Medigue C."/>
            <person name="Rocha E.P.C."/>
            <person name="Denamur E."/>
        </authorList>
    </citation>
    <scope>NUCLEOTIDE SEQUENCE [LARGE SCALE GENOMIC DNA]</scope>
    <source>
        <strain>IAI39 / ExPEC</strain>
    </source>
</reference>
<gene>
    <name evidence="1" type="primary">sotB</name>
    <name type="ordered locus">ECIAI39_1824</name>
</gene>
<feature type="chain" id="PRO_1000127456" description="Probable sugar efflux transporter">
    <location>
        <begin position="1"/>
        <end position="396"/>
    </location>
</feature>
<feature type="transmembrane region" description="Helical" evidence="1">
    <location>
        <begin position="15"/>
        <end position="35"/>
    </location>
</feature>
<feature type="transmembrane region" description="Helical" evidence="1">
    <location>
        <begin position="50"/>
        <end position="70"/>
    </location>
</feature>
<feature type="transmembrane region" description="Helical" evidence="1">
    <location>
        <begin position="81"/>
        <end position="101"/>
    </location>
</feature>
<feature type="transmembrane region" description="Helical" evidence="1">
    <location>
        <begin position="103"/>
        <end position="123"/>
    </location>
</feature>
<feature type="transmembrane region" description="Helical" evidence="1">
    <location>
        <begin position="136"/>
        <end position="156"/>
    </location>
</feature>
<feature type="transmembrane region" description="Helical" evidence="1">
    <location>
        <begin position="170"/>
        <end position="190"/>
    </location>
</feature>
<feature type="transmembrane region" description="Helical" evidence="1">
    <location>
        <begin position="209"/>
        <end position="229"/>
    </location>
</feature>
<feature type="transmembrane region" description="Helical" evidence="1">
    <location>
        <begin position="246"/>
        <end position="266"/>
    </location>
</feature>
<feature type="transmembrane region" description="Helical" evidence="1">
    <location>
        <begin position="275"/>
        <end position="295"/>
    </location>
</feature>
<feature type="transmembrane region" description="Helical" evidence="1">
    <location>
        <begin position="299"/>
        <end position="319"/>
    </location>
</feature>
<feature type="transmembrane region" description="Helical" evidence="1">
    <location>
        <begin position="333"/>
        <end position="353"/>
    </location>
</feature>
<feature type="transmembrane region" description="Helical" evidence="1">
    <location>
        <begin position="364"/>
        <end position="384"/>
    </location>
</feature>
<accession>B7NIN3</accession>
<sequence length="396" mass="42538">MTTNTVSRKVAWLRVVTLAVAAFIFNTTEFVPVGLLSDIAQSFHMQTAQVGIMLTIYAWVVALMSLPFMLMTSQVERRKLLICLFVVFIASHVLSFLSWSFTVLVISRIGVAFAHAIFWSITASLAIRMAPAGKRAQALSLIATGTALAMVLGLPLGRIVGQYFGWRMTFFAIGIGALITLLCLIKLLPLLPSEHSGSLKSLPLLFRRPALMSIYLLTVVVVTAHYTAYSYIEPFVQNIAGFSANFATALLLLLGGAGIIGSVIFGKLGNQYASALVSTAIALLLVCLALLLPAANSEIHLGVLSIFWGIAMMIIGLGMQVKVLALAPDATDVAMALFSGIFNIGIGAGALVGNQVSLHWSMSMIGYVGAVPAFAALIWSIIIFRRWPVTLEEQTQ</sequence>
<comment type="function">
    <text evidence="1">Involved in the efflux of sugars. The physiological role may be the reduction of the intracellular concentration of toxic sugars or sugar metabolites.</text>
</comment>
<comment type="subcellular location">
    <subcellularLocation>
        <location evidence="1">Cell inner membrane</location>
        <topology evidence="1">Multi-pass membrane protein</topology>
    </subcellularLocation>
</comment>
<comment type="similarity">
    <text evidence="1">Belongs to the major facilitator superfamily. SotB (TC 2.A.1.2) family.</text>
</comment>
<organism>
    <name type="scientific">Escherichia coli O7:K1 (strain IAI39 / ExPEC)</name>
    <dbReference type="NCBI Taxonomy" id="585057"/>
    <lineage>
        <taxon>Bacteria</taxon>
        <taxon>Pseudomonadati</taxon>
        <taxon>Pseudomonadota</taxon>
        <taxon>Gammaproteobacteria</taxon>
        <taxon>Enterobacterales</taxon>
        <taxon>Enterobacteriaceae</taxon>
        <taxon>Escherichia</taxon>
    </lineage>
</organism>
<proteinExistence type="inferred from homology"/>
<evidence type="ECO:0000255" key="1">
    <source>
        <dbReference type="HAMAP-Rule" id="MF_00517"/>
    </source>
</evidence>
<keyword id="KW-0997">Cell inner membrane</keyword>
<keyword id="KW-1003">Cell membrane</keyword>
<keyword id="KW-0472">Membrane</keyword>
<keyword id="KW-0762">Sugar transport</keyword>
<keyword id="KW-0812">Transmembrane</keyword>
<keyword id="KW-1133">Transmembrane helix</keyword>
<keyword id="KW-0813">Transport</keyword>
<dbReference type="EMBL" id="CU928164">
    <property type="protein sequence ID" value="CAR17955.1"/>
    <property type="molecule type" value="Genomic_DNA"/>
</dbReference>
<dbReference type="RefSeq" id="YP_002407804.1">
    <property type="nucleotide sequence ID" value="NC_011750.1"/>
</dbReference>
<dbReference type="SMR" id="B7NIN3"/>
<dbReference type="STRING" id="585057.ECIAI39_1824"/>
<dbReference type="KEGG" id="ect:ECIAI39_1824"/>
<dbReference type="PATRIC" id="fig|585057.6.peg.1898"/>
<dbReference type="HOGENOM" id="CLU_001265_61_1_6"/>
<dbReference type="Proteomes" id="UP000000749">
    <property type="component" value="Chromosome"/>
</dbReference>
<dbReference type="GO" id="GO:0005886">
    <property type="term" value="C:plasma membrane"/>
    <property type="evidence" value="ECO:0007669"/>
    <property type="project" value="UniProtKB-SubCell"/>
</dbReference>
<dbReference type="GO" id="GO:0015144">
    <property type="term" value="F:carbohydrate transmembrane transporter activity"/>
    <property type="evidence" value="ECO:0007669"/>
    <property type="project" value="UniProtKB-UniRule"/>
</dbReference>
<dbReference type="CDD" id="cd17324">
    <property type="entry name" value="MFS_NepI_like"/>
    <property type="match status" value="1"/>
</dbReference>
<dbReference type="FunFam" id="1.20.1250.20:FF:000079">
    <property type="entry name" value="Probable sugar efflux transporter"/>
    <property type="match status" value="1"/>
</dbReference>
<dbReference type="Gene3D" id="1.20.1250.20">
    <property type="entry name" value="MFS general substrate transporter like domains"/>
    <property type="match status" value="1"/>
</dbReference>
<dbReference type="HAMAP" id="MF_00517">
    <property type="entry name" value="MFS_SotB"/>
    <property type="match status" value="1"/>
</dbReference>
<dbReference type="InterPro" id="IPR011701">
    <property type="entry name" value="MFS"/>
</dbReference>
<dbReference type="InterPro" id="IPR020846">
    <property type="entry name" value="MFS_dom"/>
</dbReference>
<dbReference type="InterPro" id="IPR050189">
    <property type="entry name" value="MFS_Efflux_Transporters"/>
</dbReference>
<dbReference type="InterPro" id="IPR036259">
    <property type="entry name" value="MFS_trans_sf"/>
</dbReference>
<dbReference type="InterPro" id="IPR023495">
    <property type="entry name" value="Sugar_effux_transptr_put"/>
</dbReference>
<dbReference type="NCBIfam" id="NF002921">
    <property type="entry name" value="PRK03545.1"/>
    <property type="match status" value="1"/>
</dbReference>
<dbReference type="PANTHER" id="PTHR43124">
    <property type="entry name" value="PURINE EFFLUX PUMP PBUE"/>
    <property type="match status" value="1"/>
</dbReference>
<dbReference type="PANTHER" id="PTHR43124:SF4">
    <property type="entry name" value="SUGAR EFFLUX TRANSPORTER"/>
    <property type="match status" value="1"/>
</dbReference>
<dbReference type="Pfam" id="PF07690">
    <property type="entry name" value="MFS_1"/>
    <property type="match status" value="1"/>
</dbReference>
<dbReference type="SUPFAM" id="SSF103473">
    <property type="entry name" value="MFS general substrate transporter"/>
    <property type="match status" value="1"/>
</dbReference>
<dbReference type="PROSITE" id="PS50850">
    <property type="entry name" value="MFS"/>
    <property type="match status" value="1"/>
</dbReference>
<protein>
    <recommendedName>
        <fullName evidence="1">Probable sugar efflux transporter</fullName>
    </recommendedName>
</protein>
<name>SOTB_ECO7I</name>